<evidence type="ECO:0000250" key="1"/>
<evidence type="ECO:0000255" key="2"/>
<evidence type="ECO:0000305" key="3"/>
<feature type="signal peptide" evidence="2">
    <location>
        <begin position="1"/>
        <end position="25"/>
    </location>
</feature>
<feature type="chain" id="PRO_0000000023" description="Protein 5NUC">
    <location>
        <begin position="26"/>
        <end position="572"/>
    </location>
</feature>
<feature type="binding site" evidence="1">
    <location>
        <position position="39"/>
    </location>
    <ligand>
        <name>Zn(2+)</name>
        <dbReference type="ChEBI" id="CHEBI:29105"/>
        <label>1</label>
    </ligand>
</feature>
<feature type="binding site" evidence="1">
    <location>
        <position position="41"/>
    </location>
    <ligand>
        <name>Zn(2+)</name>
        <dbReference type="ChEBI" id="CHEBI:29105"/>
        <label>1</label>
    </ligand>
</feature>
<feature type="binding site" evidence="1">
    <location>
        <position position="93"/>
    </location>
    <ligand>
        <name>Zn(2+)</name>
        <dbReference type="ChEBI" id="CHEBI:29105"/>
        <label>1</label>
    </ligand>
</feature>
<feature type="binding site" evidence="1">
    <location>
        <position position="93"/>
    </location>
    <ligand>
        <name>Zn(2+)</name>
        <dbReference type="ChEBI" id="CHEBI:29105"/>
        <label>2</label>
    </ligand>
</feature>
<feature type="binding site" evidence="1">
    <location>
        <position position="125"/>
    </location>
    <ligand>
        <name>Zn(2+)</name>
        <dbReference type="ChEBI" id="CHEBI:29105"/>
        <label>2</label>
    </ligand>
</feature>
<feature type="binding site" evidence="1">
    <location>
        <position position="227"/>
    </location>
    <ligand>
        <name>Zn(2+)</name>
        <dbReference type="ChEBI" id="CHEBI:29105"/>
        <label>2</label>
    </ligand>
</feature>
<feature type="binding site" evidence="1">
    <location>
        <position position="250"/>
    </location>
    <ligand>
        <name>Zn(2+)</name>
        <dbReference type="ChEBI" id="CHEBI:29105"/>
        <label>2</label>
    </ligand>
</feature>
<feature type="binding site" evidence="1">
    <location>
        <position position="361"/>
    </location>
    <ligand>
        <name>substrate</name>
    </ligand>
</feature>
<feature type="binding site" evidence="1">
    <location>
        <position position="399"/>
    </location>
    <ligand>
        <name>substrate</name>
    </ligand>
</feature>
<feature type="binding site" evidence="1">
    <location>
        <position position="404"/>
    </location>
    <ligand>
        <name>substrate</name>
    </ligand>
</feature>
<feature type="binding site" evidence="1">
    <location>
        <position position="427"/>
    </location>
    <ligand>
        <name>substrate</name>
    </ligand>
</feature>
<feature type="binding site" evidence="1">
    <location>
        <begin position="512"/>
        <end position="518"/>
    </location>
    <ligand>
        <name>substrate</name>
    </ligand>
</feature>
<feature type="site" description="Transition state stabilizer" evidence="1">
    <location>
        <position position="126"/>
    </location>
</feature>
<feature type="site" description="Transition state stabilizer" evidence="1">
    <location>
        <position position="129"/>
    </location>
</feature>
<feature type="glycosylation site" description="N-linked (GlcNAc...) asparagine" evidence="2">
    <location>
        <position position="82"/>
    </location>
</feature>
<feature type="glycosylation site" description="N-linked (GlcNAc...) asparagine" evidence="2">
    <location>
        <position position="454"/>
    </location>
</feature>
<feature type="glycosylation site" description="N-linked (GlcNAc...) asparagine" evidence="2">
    <location>
        <position position="490"/>
    </location>
</feature>
<feature type="disulfide bond" evidence="1">
    <location>
        <begin position="54"/>
        <end position="64"/>
    </location>
</feature>
<feature type="disulfide bond" evidence="1">
    <location>
        <begin position="360"/>
        <end position="365"/>
    </location>
</feature>
<feature type="disulfide bond" evidence="1">
    <location>
        <begin position="488"/>
        <end position="491"/>
    </location>
</feature>
<protein>
    <recommendedName>
        <fullName>Protein 5NUC</fullName>
    </recommendedName>
    <domain>
        <recommendedName>
            <fullName>UDP-sugar hydrolase</fullName>
            <ecNumber>3.6.1.45</ecNumber>
        </recommendedName>
        <alternativeName>
            <fullName>UDP-sugar diphosphatase</fullName>
        </alternativeName>
        <alternativeName>
            <fullName>UDP-sugar pyrophosphatase</fullName>
        </alternativeName>
    </domain>
    <domain>
        <recommendedName>
            <fullName>5'-nucleotidase</fullName>
            <shortName>5'-NT</shortName>
            <ecNumber>3.1.3.5</ecNumber>
        </recommendedName>
    </domain>
</protein>
<gene>
    <name type="primary">5NUC</name>
</gene>
<comment type="function">
    <text evidence="1">Degradation of external UDP-glucose to uridine monophosphate and glucose-1-phosphate, which can then be used by the cell.</text>
</comment>
<comment type="catalytic activity">
    <reaction>
        <text>UDP-sugar + H2O = UMP + alpha-D-aldose 1-phosphate.</text>
        <dbReference type="EC" id="3.6.1.45"/>
    </reaction>
</comment>
<comment type="catalytic activity">
    <reaction>
        <text>a ribonucleoside 5'-phosphate + H2O = a ribonucleoside + phosphate</text>
        <dbReference type="Rhea" id="RHEA:12484"/>
        <dbReference type="ChEBI" id="CHEBI:15377"/>
        <dbReference type="ChEBI" id="CHEBI:18254"/>
        <dbReference type="ChEBI" id="CHEBI:43474"/>
        <dbReference type="ChEBI" id="CHEBI:58043"/>
        <dbReference type="EC" id="3.1.3.5"/>
    </reaction>
</comment>
<comment type="cofactor">
    <cofactor evidence="1">
        <name>Zn(2+)</name>
        <dbReference type="ChEBI" id="CHEBI:29105"/>
    </cofactor>
</comment>
<comment type="similarity">
    <text evidence="3">Belongs to the 5'-nucleotidase family.</text>
</comment>
<name>5NTD_LUTLO</name>
<reference key="1">
    <citation type="journal article" date="1999" name="Proc. Natl. Acad. Sci. U.S.A.">
        <title>Toward an understanding of the biochemical and pharmacological complexity of the saliva of a hematophagous sand fly Lutzomyia longipalpis.</title>
        <authorList>
            <person name="Charlab R."/>
            <person name="Valenzuela J.G."/>
            <person name="Rowton E.D."/>
            <person name="Ribeiro J.M."/>
        </authorList>
    </citation>
    <scope>NUCLEOTIDE SEQUENCE [MRNA]</scope>
    <source>
        <strain>Jacobina</strain>
        <tissue>Salivary gland</tissue>
    </source>
</reference>
<reference key="2">
    <citation type="journal article" date="2000" name="Insect Biochem. Mol. Biol.">
        <title>The salivary 5'-nucleotidase/phosphodiesterase of the hematophagus sand fly, Lutzomyia longipalpis.</title>
        <authorList>
            <person name="Ribeiro J.M.C."/>
            <person name="Rowton E.D."/>
            <person name="Charlab R."/>
        </authorList>
    </citation>
    <scope>CHARACTERIZATION</scope>
    <source>
        <tissue>Salivary gland</tissue>
    </source>
</reference>
<reference key="3">
    <citation type="journal article" date="2000" name="Insect Biochem. Mol. Biol.">
        <authorList>
            <person name="Ribeiro J.M.C."/>
            <person name="Rowton E.D."/>
            <person name="Charlab R."/>
        </authorList>
    </citation>
    <scope>ERRATUM OF PUBMED:10727894</scope>
</reference>
<organism>
    <name type="scientific">Lutzomyia longipalpis</name>
    <name type="common">Sand fly</name>
    <dbReference type="NCBI Taxonomy" id="7200"/>
    <lineage>
        <taxon>Eukaryota</taxon>
        <taxon>Metazoa</taxon>
        <taxon>Ecdysozoa</taxon>
        <taxon>Arthropoda</taxon>
        <taxon>Hexapoda</taxon>
        <taxon>Insecta</taxon>
        <taxon>Pterygota</taxon>
        <taxon>Neoptera</taxon>
        <taxon>Endopterygota</taxon>
        <taxon>Diptera</taxon>
        <taxon>Nematocera</taxon>
        <taxon>Psychodoidea</taxon>
        <taxon>Psychodidae</taxon>
        <taxon>Lutzomyia</taxon>
        <taxon>Lutzomyia</taxon>
    </lineage>
</organism>
<proteinExistence type="evidence at protein level"/>
<dbReference type="EC" id="3.6.1.45"/>
<dbReference type="EC" id="3.1.3.5"/>
<dbReference type="EMBL" id="AF132510">
    <property type="protein sequence ID" value="AAD32190.1"/>
    <property type="molecule type" value="mRNA"/>
</dbReference>
<dbReference type="SMR" id="Q9XZ43"/>
<dbReference type="GlyCosmos" id="Q9XZ43">
    <property type="glycosylation" value="3 sites, No reported glycans"/>
</dbReference>
<dbReference type="VEuPathDB" id="VectorBase:LLOJ009119"/>
<dbReference type="VEuPathDB" id="VectorBase:LLONM1_003668"/>
<dbReference type="Proteomes" id="UP000092461">
    <property type="component" value="Unassembled WGS sequence"/>
</dbReference>
<dbReference type="GO" id="GO:0005886">
    <property type="term" value="C:plasma membrane"/>
    <property type="evidence" value="ECO:0007669"/>
    <property type="project" value="TreeGrafter"/>
</dbReference>
<dbReference type="GO" id="GO:0008253">
    <property type="term" value="F:5'-nucleotidase activity"/>
    <property type="evidence" value="ECO:0007669"/>
    <property type="project" value="UniProtKB-EC"/>
</dbReference>
<dbReference type="GO" id="GO:0046872">
    <property type="term" value="F:metal ion binding"/>
    <property type="evidence" value="ECO:0007669"/>
    <property type="project" value="UniProtKB-KW"/>
</dbReference>
<dbReference type="GO" id="GO:0000166">
    <property type="term" value="F:nucleotide binding"/>
    <property type="evidence" value="ECO:0007669"/>
    <property type="project" value="UniProtKB-KW"/>
</dbReference>
<dbReference type="GO" id="GO:0008768">
    <property type="term" value="F:UDP-sugar diphosphatase activity"/>
    <property type="evidence" value="ECO:0007669"/>
    <property type="project" value="UniProtKB-EC"/>
</dbReference>
<dbReference type="GO" id="GO:0006196">
    <property type="term" value="P:AMP catabolic process"/>
    <property type="evidence" value="ECO:0007669"/>
    <property type="project" value="TreeGrafter"/>
</dbReference>
<dbReference type="CDD" id="cd07409">
    <property type="entry name" value="MPP_CD73_N"/>
    <property type="match status" value="1"/>
</dbReference>
<dbReference type="FunFam" id="3.90.780.10:FF:000001">
    <property type="entry name" value="NT5E isoform 3"/>
    <property type="match status" value="1"/>
</dbReference>
<dbReference type="FunFam" id="3.60.21.10:FF:000020">
    <property type="entry name" value="NT5E isoform 4"/>
    <property type="match status" value="1"/>
</dbReference>
<dbReference type="Gene3D" id="3.60.21.10">
    <property type="match status" value="1"/>
</dbReference>
<dbReference type="Gene3D" id="3.90.780.10">
    <property type="entry name" value="5'-Nucleotidase, C-terminal domain"/>
    <property type="match status" value="1"/>
</dbReference>
<dbReference type="InterPro" id="IPR008334">
    <property type="entry name" value="5'-Nucleotdase_C"/>
</dbReference>
<dbReference type="InterPro" id="IPR036907">
    <property type="entry name" value="5'-Nucleotdase_C_sf"/>
</dbReference>
<dbReference type="InterPro" id="IPR006146">
    <property type="entry name" value="5'-Nucleotdase_CS"/>
</dbReference>
<dbReference type="InterPro" id="IPR006179">
    <property type="entry name" value="5_nucleotidase/apyrase"/>
</dbReference>
<dbReference type="InterPro" id="IPR004843">
    <property type="entry name" value="Calcineurin-like_PHP_ApaH"/>
</dbReference>
<dbReference type="InterPro" id="IPR029052">
    <property type="entry name" value="Metallo-depent_PP-like"/>
</dbReference>
<dbReference type="PANTHER" id="PTHR11575:SF24">
    <property type="entry name" value="5'-NUCLEOTIDASE"/>
    <property type="match status" value="1"/>
</dbReference>
<dbReference type="PANTHER" id="PTHR11575">
    <property type="entry name" value="5'-NUCLEOTIDASE-RELATED"/>
    <property type="match status" value="1"/>
</dbReference>
<dbReference type="Pfam" id="PF02872">
    <property type="entry name" value="5_nucleotid_C"/>
    <property type="match status" value="1"/>
</dbReference>
<dbReference type="Pfam" id="PF00149">
    <property type="entry name" value="Metallophos"/>
    <property type="match status" value="1"/>
</dbReference>
<dbReference type="PRINTS" id="PR01607">
    <property type="entry name" value="APYRASEFAMLY"/>
</dbReference>
<dbReference type="SUPFAM" id="SSF55816">
    <property type="entry name" value="5'-nucleotidase (syn. UDP-sugar hydrolase), C-terminal domain"/>
    <property type="match status" value="1"/>
</dbReference>
<dbReference type="SUPFAM" id="SSF56300">
    <property type="entry name" value="Metallo-dependent phosphatases"/>
    <property type="match status" value="1"/>
</dbReference>
<dbReference type="PROSITE" id="PS00785">
    <property type="entry name" value="5_NUCLEOTIDASE_1"/>
    <property type="match status" value="1"/>
</dbReference>
<dbReference type="PROSITE" id="PS00786">
    <property type="entry name" value="5_NUCLEOTIDASE_2"/>
    <property type="match status" value="1"/>
</dbReference>
<accession>Q9XZ43</accession>
<sequence length="572" mass="63354">MLFFLNFFVLVFSIELALLTASAAAEDGSYEIIILHTNDMHARFDQTNAGSNKCQEKDKIASKCYGGFARVSTMVKKFREENGSSVLFLNAGDTYTGTPWFTLYKETIATEMMNILRPDAASLGNHEFDKGVEGLVPFLNGVTFPILTANLDTSQEPTMTNAKNLKRSMIFTVSGHRVGVIGYLTPDTKFLSDVGKVNFIPEVEAINTEAQRLKKEENAEIIIVVGHSGLIKDREIAEKCPLVDIIVGGHSHTFLYTGSQPDREVPVDVYPVVVTQSSGKKVPIVQAYCFTKYLGYFKVTINGKGNVVGWTGQPILLNNNIPQDQEVLTALEKYRERVENYGNRVIGVSRVILNGGHTECRFHECNMGNLITDAFVYANVISTPMSTNAWTDASVVLYQSGGIRAPIDPRTAAGSITRLELDNVLPFGNALYVVKVPGNVLRKALEHSVHRYSNTSGWGEFPQVSGLKIRFNVNEEIGKRVKSVKVLCSNCSQPEYQPLRNKKTYNVIMDSFMKDGGDGYSMFKPLKIIKTLPLGDIETVEAYIEKMGPIFPAVEGRITVLGGLQKSDEDWH</sequence>
<keyword id="KW-1015">Disulfide bond</keyword>
<keyword id="KW-0325">Glycoprotein</keyword>
<keyword id="KW-0378">Hydrolase</keyword>
<keyword id="KW-0479">Metal-binding</keyword>
<keyword id="KW-0547">Nucleotide-binding</keyword>
<keyword id="KW-0732">Signal</keyword>
<keyword id="KW-0862">Zinc</keyword>